<sequence length="96" mass="11378">MEQAPEDQGPQREPYNEWTLELLRKLKSEAVRHFPRIWLHGLGQHIYETYGDTWAGVEAIIRILQQLLFIHFRIGCRHSRIGIIQQRRSRNGSSRS</sequence>
<protein>
    <recommendedName>
        <fullName evidence="1">Protein Vpr</fullName>
    </recommendedName>
    <alternativeName>
        <fullName evidence="1">R ORF protein</fullName>
    </alternativeName>
    <alternativeName>
        <fullName evidence="1">Viral protein R</fullName>
    </alternativeName>
</protein>
<proteinExistence type="inferred from homology"/>
<organismHost>
    <name type="scientific">Homo sapiens</name>
    <name type="common">Human</name>
    <dbReference type="NCBI Taxonomy" id="9606"/>
</organismHost>
<gene>
    <name evidence="1" type="primary">vpr</name>
</gene>
<organism>
    <name type="scientific">Human immunodeficiency virus type 1 group M subtype B (isolate SC)</name>
    <name type="common">HIV-1</name>
    <dbReference type="NCBI Taxonomy" id="11702"/>
    <lineage>
        <taxon>Viruses</taxon>
        <taxon>Riboviria</taxon>
        <taxon>Pararnavirae</taxon>
        <taxon>Artverviricota</taxon>
        <taxon>Revtraviricetes</taxon>
        <taxon>Ortervirales</taxon>
        <taxon>Retroviridae</taxon>
        <taxon>Orthoretrovirinae</taxon>
        <taxon>Lentivirus</taxon>
        <taxon>Human immunodeficiency virus type 1</taxon>
    </lineage>
</organism>
<name>VPR_HV1SC</name>
<comment type="function">
    <text evidence="1">During virus replication, may deplete host UNG protein, and incude G2-M cell cycle arrest. Acts by targeting specific host proteins for degradation by the 26S proteasome, through association with the cellular CUL4A-DDB1 E3 ligase complex by direct interaction with host VPRPB/DCAF-1. Cell cycle arrest reportedly occurs within hours of infection and is not blocked by antiviral agents, suggesting that it is initiated by the VPR carried into the virion. Additionally, VPR induces apoptosis in a cell cycle dependent manner suggesting that these two effects are mechanistically linked. Detected in the serum and cerebrospinal fluid of AIDS patient, VPR may also induce cell death to bystander cells.</text>
</comment>
<comment type="function">
    <text evidence="1">During virus entry, plays a role in the transport of the viral pre-integration (PIC) complex to the host nucleus. This function is crucial for viral infection of non-dividing macrophages. May act directly at the nuclear pore complex, by binding nucleoporins phenylalanine-glycine (FG)-repeat regions.</text>
</comment>
<comment type="subunit">
    <text evidence="1">Homooligomer, may form homodimer. Interacts with p6-gag region of the Pr55 Gag precursor protein through a (Leu-X-X)4 motif near the C-terminus of the P6gag protein. Interacts with host UNG. May interact with host RAD23A/HHR23A. Interacts with host VPRBP/DCAF1, leading to hijack the CUL4A-RBX1-DDB1-DCAF1/VPRBP complex, mediating ubiquitination of host proteins such as TERT and ZGPAT and arrest of the cell cycle in G2 phase.</text>
</comment>
<comment type="subcellular location">
    <subcellularLocation>
        <location evidence="1">Virion</location>
    </subcellularLocation>
    <subcellularLocation>
        <location evidence="1">Host nucleus</location>
    </subcellularLocation>
    <subcellularLocation>
        <location evidence="1">Host extracellular space</location>
    </subcellularLocation>
    <text evidence="1">Incorporation into virion is dependent on p6 GAG sequences. Lacks a canonical nuclear localization signal, thus import into nucleus may function independently of the human importin pathway. Detected in high quantity in the serum and cerebrospinal fluid of AIDS patient.</text>
</comment>
<comment type="PTM">
    <text evidence="1">Phosphorylated on several residues by host. These phosphorylations regulate VPR activity for the nuclear import of the HIV-1 pre-integration complex.</text>
</comment>
<comment type="miscellaneous">
    <text evidence="1">HIV-1 lineages are divided in three main groups, M (for Major), O (for Outlier), and N (for New, or Non-M, Non-O). The vast majority of strains found worldwide belong to the group M. Group O seems to be endemic to and largely confined to Cameroon and neighboring countries in West Central Africa, where these viruses represent a small minority of HIV-1 strains. The group N is represented by a limited number of isolates from Cameroonian persons. The group M is further subdivided in 9 clades or subtypes (A to D, F to H, J and K).</text>
</comment>
<comment type="similarity">
    <text evidence="1">Belongs to the HIV-1 VPR protein family.</text>
</comment>
<dbReference type="EMBL" id="M17450">
    <property type="protein sequence ID" value="AAA45062.1"/>
    <property type="molecule type" value="Genomic_RNA"/>
</dbReference>
<dbReference type="BMRB" id="P05951"/>
<dbReference type="SMR" id="P05951"/>
<dbReference type="GO" id="GO:0043657">
    <property type="term" value="C:host cell"/>
    <property type="evidence" value="ECO:0007669"/>
    <property type="project" value="GOC"/>
</dbReference>
<dbReference type="GO" id="GO:0042025">
    <property type="term" value="C:host cell nucleus"/>
    <property type="evidence" value="ECO:0007669"/>
    <property type="project" value="UniProtKB-SubCell"/>
</dbReference>
<dbReference type="GO" id="GO:0043655">
    <property type="term" value="C:host extracellular space"/>
    <property type="evidence" value="ECO:0007669"/>
    <property type="project" value="UniProtKB-SubCell"/>
</dbReference>
<dbReference type="GO" id="GO:0044423">
    <property type="term" value="C:virion component"/>
    <property type="evidence" value="ECO:0007669"/>
    <property type="project" value="UniProtKB-UniRule"/>
</dbReference>
<dbReference type="GO" id="GO:0006351">
    <property type="term" value="P:DNA-templated transcription"/>
    <property type="evidence" value="ECO:0007669"/>
    <property type="project" value="UniProtKB-UniRule"/>
</dbReference>
<dbReference type="GO" id="GO:0034220">
    <property type="term" value="P:monoatomic ion transmembrane transport"/>
    <property type="evidence" value="ECO:0007669"/>
    <property type="project" value="UniProtKB-KW"/>
</dbReference>
<dbReference type="GO" id="GO:0051260">
    <property type="term" value="P:protein homooligomerization"/>
    <property type="evidence" value="ECO:0007669"/>
    <property type="project" value="UniProtKB-UniRule"/>
</dbReference>
<dbReference type="GO" id="GO:0006355">
    <property type="term" value="P:regulation of DNA-templated transcription"/>
    <property type="evidence" value="ECO:0007669"/>
    <property type="project" value="UniProtKB-UniRule"/>
</dbReference>
<dbReference type="GO" id="GO:0046718">
    <property type="term" value="P:symbiont entry into host cell"/>
    <property type="evidence" value="ECO:0007669"/>
    <property type="project" value="UniProtKB-KW"/>
</dbReference>
<dbReference type="GO" id="GO:0052151">
    <property type="term" value="P:symbiont-mediated activation of host apoptosis"/>
    <property type="evidence" value="ECO:0007669"/>
    <property type="project" value="UniProtKB-UniRule"/>
</dbReference>
<dbReference type="GO" id="GO:0039592">
    <property type="term" value="P:symbiont-mediated arrest of host cell cycle during G2/M transition"/>
    <property type="evidence" value="ECO:0007669"/>
    <property type="project" value="UniProtKB-UniRule"/>
</dbReference>
<dbReference type="GO" id="GO:0075732">
    <property type="term" value="P:viral penetration into host nucleus"/>
    <property type="evidence" value="ECO:0007669"/>
    <property type="project" value="UniProtKB-UniRule"/>
</dbReference>
<dbReference type="Gene3D" id="6.10.210.10">
    <property type="match status" value="1"/>
</dbReference>
<dbReference type="Gene3D" id="1.20.5.90">
    <property type="entry name" value="VpR/VpX protein, C-terminal domain"/>
    <property type="match status" value="1"/>
</dbReference>
<dbReference type="HAMAP" id="MF_04080">
    <property type="entry name" value="HIV_VPR"/>
    <property type="match status" value="1"/>
</dbReference>
<dbReference type="InterPro" id="IPR000012">
    <property type="entry name" value="RetroV_VpR/X"/>
</dbReference>
<dbReference type="Pfam" id="PF00522">
    <property type="entry name" value="VPR"/>
    <property type="match status" value="1"/>
</dbReference>
<dbReference type="PRINTS" id="PR00444">
    <property type="entry name" value="HIVVPRVPX"/>
</dbReference>
<keyword id="KW-0010">Activator</keyword>
<keyword id="KW-0014">AIDS</keyword>
<keyword id="KW-0053">Apoptosis</keyword>
<keyword id="KW-0131">Cell cycle</keyword>
<keyword id="KW-1079">Host G2/M cell cycle arrest by virus</keyword>
<keyword id="KW-1048">Host nucleus</keyword>
<keyword id="KW-0945">Host-virus interaction</keyword>
<keyword id="KW-0407">Ion channel</keyword>
<keyword id="KW-0406">Ion transport</keyword>
<keyword id="KW-1121">Modulation of host cell cycle by virus</keyword>
<keyword id="KW-0597">Phosphoprotein</keyword>
<keyword id="KW-0804">Transcription</keyword>
<keyword id="KW-0805">Transcription regulation</keyword>
<keyword id="KW-0813">Transport</keyword>
<keyword id="KW-1163">Viral penetration into host nucleus</keyword>
<keyword id="KW-0946">Virion</keyword>
<keyword id="KW-1160">Virus entry into host cell</keyword>
<feature type="chain" id="PRO_0000085449" description="Protein Vpr">
    <location>
        <begin position="1"/>
        <end position="96"/>
    </location>
</feature>
<feature type="region of interest" description="Homooligomerization" evidence="1">
    <location>
        <begin position="1"/>
        <end position="42"/>
    </location>
</feature>
<feature type="modified residue" description="Phosphoserine; by host" evidence="1">
    <location>
        <position position="79"/>
    </location>
</feature>
<feature type="modified residue" description="Phosphoserine; by host" evidence="1">
    <location>
        <position position="94"/>
    </location>
</feature>
<feature type="modified residue" description="Phosphoserine; by host" evidence="1">
    <location>
        <position position="96"/>
    </location>
</feature>
<accession>P05951</accession>
<reference key="1">
    <citation type="journal article" date="1988" name="Virology">
        <title>Envelope sequences of two new United States HIV-1 isolates.</title>
        <authorList>
            <person name="Gurgo C."/>
            <person name="Guo H.-G."/>
            <person name="Franchini G."/>
            <person name="Aldovini A."/>
            <person name="Collalti E."/>
            <person name="Farrell K."/>
            <person name="Wong-Staal F."/>
            <person name="Gallo R.C."/>
            <person name="Reitz M.S. Jr."/>
        </authorList>
    </citation>
    <scope>NUCLEOTIDE SEQUENCE [GENOMIC RNA]</scope>
</reference>
<evidence type="ECO:0000255" key="1">
    <source>
        <dbReference type="HAMAP-Rule" id="MF_04080"/>
    </source>
</evidence>